<comment type="function">
    <text evidence="1">Catalyzes the first step of the methylation pathway of phosphatidylcholine biosynthesis, the SAM-dependent methylation of phosphatidylethanolamine (PE) to phosphatidylmonomethylethanolamine (PMME).</text>
</comment>
<comment type="catalytic activity">
    <reaction evidence="1">
        <text>a 1,2-diacyl-sn-glycero-3-phosphoethanolamine + S-adenosyl-L-methionine = a 1,2-diacyl-sn-glycero-3-phospho-N-methylethanolamine + S-adenosyl-L-homocysteine + H(+)</text>
        <dbReference type="Rhea" id="RHEA:11164"/>
        <dbReference type="ChEBI" id="CHEBI:15378"/>
        <dbReference type="ChEBI" id="CHEBI:57856"/>
        <dbReference type="ChEBI" id="CHEBI:59789"/>
        <dbReference type="ChEBI" id="CHEBI:64573"/>
        <dbReference type="ChEBI" id="CHEBI:64612"/>
        <dbReference type="EC" id="2.1.1.17"/>
    </reaction>
</comment>
<comment type="pathway">
    <text evidence="1">Phospholipid metabolism; phosphatidylcholine biosynthesis.</text>
</comment>
<comment type="subcellular location">
    <subcellularLocation>
        <location evidence="1">Endoplasmic reticulum membrane</location>
        <topology evidence="1">Multi-pass membrane protein</topology>
    </subcellularLocation>
</comment>
<comment type="similarity">
    <text evidence="1">Belongs to the class VI-like SAM-binding methyltransferase superfamily. CHO2 family.</text>
</comment>
<organism>
    <name type="scientific">Aspergillus terreus (strain NIH 2624 / FGSC A1156)</name>
    <dbReference type="NCBI Taxonomy" id="341663"/>
    <lineage>
        <taxon>Eukaryota</taxon>
        <taxon>Fungi</taxon>
        <taxon>Dikarya</taxon>
        <taxon>Ascomycota</taxon>
        <taxon>Pezizomycotina</taxon>
        <taxon>Eurotiomycetes</taxon>
        <taxon>Eurotiomycetidae</taxon>
        <taxon>Eurotiales</taxon>
        <taxon>Aspergillaceae</taxon>
        <taxon>Aspergillus</taxon>
        <taxon>Aspergillus subgen. Circumdati</taxon>
    </lineage>
</organism>
<protein>
    <recommendedName>
        <fullName evidence="1">Phosphatidylethanolamine N-methyltransferase</fullName>
        <shortName evidence="1">PE methyltransferase</shortName>
        <shortName evidence="1">PEAMT</shortName>
        <shortName evidence="1">PEMT</shortName>
        <ecNumber evidence="1">2.1.1.17</ecNumber>
    </recommendedName>
</protein>
<gene>
    <name type="primary">cho2</name>
    <name type="ORF">ATEG_02347</name>
</gene>
<accession>Q0CVD7</accession>
<keyword id="KW-0256">Endoplasmic reticulum</keyword>
<keyword id="KW-0444">Lipid biosynthesis</keyword>
<keyword id="KW-0443">Lipid metabolism</keyword>
<keyword id="KW-0472">Membrane</keyword>
<keyword id="KW-0489">Methyltransferase</keyword>
<keyword id="KW-0594">Phospholipid biosynthesis</keyword>
<keyword id="KW-1208">Phospholipid metabolism</keyword>
<keyword id="KW-1185">Reference proteome</keyword>
<keyword id="KW-0949">S-adenosyl-L-methionine</keyword>
<keyword id="KW-0808">Transferase</keyword>
<keyword id="KW-0812">Transmembrane</keyword>
<keyword id="KW-1133">Transmembrane helix</keyword>
<dbReference type="EC" id="2.1.1.17" evidence="1"/>
<dbReference type="EMBL" id="CH476596">
    <property type="protein sequence ID" value="EAU37309.1"/>
    <property type="molecule type" value="Genomic_DNA"/>
</dbReference>
<dbReference type="RefSeq" id="XP_001211525.1">
    <property type="nucleotide sequence ID" value="XM_001211525.1"/>
</dbReference>
<dbReference type="SMR" id="Q0CVD7"/>
<dbReference type="STRING" id="341663.Q0CVD7"/>
<dbReference type="EnsemblFungi" id="EAU37309">
    <property type="protein sequence ID" value="EAU37309"/>
    <property type="gene ID" value="ATEG_02347"/>
</dbReference>
<dbReference type="GeneID" id="4317303"/>
<dbReference type="VEuPathDB" id="FungiDB:ATEG_02347"/>
<dbReference type="eggNOG" id="ENOG502QRGH">
    <property type="taxonomic scope" value="Eukaryota"/>
</dbReference>
<dbReference type="HOGENOM" id="CLU_005987_0_0_1"/>
<dbReference type="OMA" id="RIWYSVG"/>
<dbReference type="OrthoDB" id="4583at2759"/>
<dbReference type="UniPathway" id="UPA00753"/>
<dbReference type="Proteomes" id="UP000007963">
    <property type="component" value="Unassembled WGS sequence"/>
</dbReference>
<dbReference type="GO" id="GO:0032541">
    <property type="term" value="C:cortical endoplasmic reticulum"/>
    <property type="evidence" value="ECO:0007669"/>
    <property type="project" value="EnsemblFungi"/>
</dbReference>
<dbReference type="GO" id="GO:0005789">
    <property type="term" value="C:endoplasmic reticulum membrane"/>
    <property type="evidence" value="ECO:0007669"/>
    <property type="project" value="UniProtKB-SubCell"/>
</dbReference>
<dbReference type="GO" id="GO:0097038">
    <property type="term" value="C:perinuclear endoplasmic reticulum"/>
    <property type="evidence" value="ECO:0007669"/>
    <property type="project" value="EnsemblFungi"/>
</dbReference>
<dbReference type="GO" id="GO:0004608">
    <property type="term" value="F:phosphatidylethanolamine N-methyltransferase activity"/>
    <property type="evidence" value="ECO:0007669"/>
    <property type="project" value="UniProtKB-UniRule"/>
</dbReference>
<dbReference type="GO" id="GO:0032259">
    <property type="term" value="P:methylation"/>
    <property type="evidence" value="ECO:0007669"/>
    <property type="project" value="UniProtKB-KW"/>
</dbReference>
<dbReference type="GO" id="GO:0006656">
    <property type="term" value="P:phosphatidylcholine biosynthetic process"/>
    <property type="evidence" value="ECO:0007669"/>
    <property type="project" value="UniProtKB-UniRule"/>
</dbReference>
<dbReference type="FunFam" id="2.60.40.2840:FF:000006">
    <property type="entry name" value="Phosphatidylethanolamine N-methyltransferase"/>
    <property type="match status" value="1"/>
</dbReference>
<dbReference type="Gene3D" id="2.60.40.2840">
    <property type="match status" value="1"/>
</dbReference>
<dbReference type="HAMAP" id="MF_03217">
    <property type="entry name" value="PEMT"/>
    <property type="match status" value="1"/>
</dbReference>
<dbReference type="InterPro" id="IPR007318">
    <property type="entry name" value="Phopholipid_MeTrfase"/>
</dbReference>
<dbReference type="InterPro" id="IPR016219">
    <property type="entry name" value="Phosphatid-EA_MeTrfase_fun"/>
</dbReference>
<dbReference type="PANTHER" id="PTHR32138">
    <property type="entry name" value="PHOSPHATIDYLETHANOLAMINE N-METHYLTRANSFERASE"/>
    <property type="match status" value="1"/>
</dbReference>
<dbReference type="PANTHER" id="PTHR32138:SF0">
    <property type="entry name" value="PHOSPHATIDYLETHANOLAMINE N-METHYLTRANSFERASE"/>
    <property type="match status" value="1"/>
</dbReference>
<dbReference type="Pfam" id="PF04191">
    <property type="entry name" value="PEMT"/>
    <property type="match status" value="2"/>
</dbReference>
<dbReference type="PIRSF" id="PIRSF000383">
    <property type="entry name" value="PEAMT"/>
    <property type="match status" value="1"/>
</dbReference>
<dbReference type="PROSITE" id="PS51598">
    <property type="entry name" value="SAM_CHO2"/>
    <property type="match status" value="1"/>
</dbReference>
<sequence>MDRGLSTGTHNDNEGLRERPVASQSASTLSPEALTATGDVEPKDTGKELKTYGRTPDGTVFTVPQTHDMVSQLLSPSEPKNLSDIIVLAILGAHILLIWALPKGAKVPVSAVLYLFWRAGYNAGIGWLLHNQSHHKTLVRWAEKTKIFVNPATGQNPHPHLYNLIKRELETKIPHDYSFEKAPLEYNTWLVFRRLVDLILMCDFTSYCLFAIACSHHPVNESLLMTVLRWFSGIVLVLFNLWVKLDAHRVVKDYAWYWGDFFYLIDQELTFDGVFEMAPHPMYSVGYAGYYGISLMAASYKVLFISIIAHAAQFAFLVFVENPHIDKTYNPPPPRKRTIDQDTASTTTHTTDSPIAPAPVDENVPHAPTFSSRPPPSVHNLLGFHNLDLYRITDTSSMLVQFLVFAVTVLTPSTPWYQFLFVANAAVWRLWYSVGIGYLLNRQSNCKAWTRHFVKYGETPHEAWNQWKGTYHLSMIMCYASFIAAVWKMYTLPSDWGYGLVLLRHVLGAGLICLQIWTSVSIYESLGEFGWFYGDFFYDESPKLTYNGIYRFLNNPERVLGLAGVWGAVLITSSGAITFLALLSHILSLAFIQFIERPHMQKLYGQSIRRDAGLVKNLKRSLPPPLKQLHGSMDKIVDGSFEFIEDFLENARPKLAAGVDTFVKDTTALFQKYPARVTITRIDEDVAGYDSRDYSLEVEGTDSSALAECDQSSGREGANARMPLDRRGDLKNLVFEYGAPIKVKWTAPLNHSKKDWIGLYRVTDNTSREITKVSSQGRWIAVNEGSYDNLTCEKGIVSSDVVIPAPHGDNREMASGEVIFSSDKLFWTQGVFEFRYHHNGKHNVMAISRPFEIRIRRFEEEGHHEMMQTSVENSLLPVVRNCFDRDPEVAPETVDEQFGSLVERDGKYAKRVVFAVHQMFGIEFAPEVVRADGTVRNLAWRICNAKKVLAPYNRS</sequence>
<feature type="chain" id="PRO_0000405879" description="Phosphatidylethanolamine N-methyltransferase">
    <location>
        <begin position="1"/>
        <end position="955"/>
    </location>
</feature>
<feature type="topological domain" description="Lumenal" evidence="1">
    <location>
        <begin position="1"/>
        <end position="81"/>
    </location>
</feature>
<feature type="transmembrane region" description="Helical" evidence="1">
    <location>
        <begin position="82"/>
        <end position="102"/>
    </location>
</feature>
<feature type="topological domain" description="Cytoplasmic" evidence="1">
    <location>
        <begin position="103"/>
        <end position="108"/>
    </location>
</feature>
<feature type="transmembrane region" description="Helical" evidence="1">
    <location>
        <begin position="109"/>
        <end position="129"/>
    </location>
</feature>
<feature type="topological domain" description="Lumenal" evidence="1">
    <location>
        <begin position="130"/>
        <end position="194"/>
    </location>
</feature>
<feature type="transmembrane region" description="Helical" evidence="1">
    <location>
        <begin position="195"/>
        <end position="215"/>
    </location>
</feature>
<feature type="topological domain" description="Cytoplasmic" evidence="1">
    <location>
        <begin position="216"/>
        <end position="222"/>
    </location>
</feature>
<feature type="transmembrane region" description="Helical" evidence="1">
    <location>
        <begin position="223"/>
        <end position="243"/>
    </location>
</feature>
<feature type="topological domain" description="Lumenal" evidence="1">
    <location>
        <begin position="244"/>
        <end position="276"/>
    </location>
</feature>
<feature type="transmembrane region" description="Helical" evidence="1">
    <location>
        <begin position="277"/>
        <end position="297"/>
    </location>
</feature>
<feature type="topological domain" description="Cytoplasmic" evidence="1">
    <location>
        <begin position="298"/>
        <end position="299"/>
    </location>
</feature>
<feature type="transmembrane region" description="Helical" evidence="1">
    <location>
        <begin position="300"/>
        <end position="320"/>
    </location>
</feature>
<feature type="topological domain" description="Lumenal" evidence="1">
    <location>
        <begin position="321"/>
        <end position="388"/>
    </location>
</feature>
<feature type="transmembrane region" description="Helical" evidence="1">
    <location>
        <begin position="389"/>
        <end position="410"/>
    </location>
</feature>
<feature type="topological domain" description="Cytoplasmic" evidence="1">
    <location>
        <begin position="411"/>
        <end position="418"/>
    </location>
</feature>
<feature type="transmembrane region" description="Helical" evidence="1">
    <location>
        <begin position="419"/>
        <end position="441"/>
    </location>
</feature>
<feature type="topological domain" description="Lumenal" evidence="1">
    <location>
        <begin position="442"/>
        <end position="472"/>
    </location>
</feature>
<feature type="transmembrane region" description="Helical" evidence="1">
    <location>
        <begin position="473"/>
        <end position="493"/>
    </location>
</feature>
<feature type="topological domain" description="Cytoplasmic" evidence="1">
    <location>
        <begin position="494"/>
        <end position="495"/>
    </location>
</feature>
<feature type="transmembrane region" description="Helical" evidence="1">
    <location>
        <begin position="496"/>
        <end position="516"/>
    </location>
</feature>
<feature type="topological domain" description="Lumenal" evidence="1">
    <location>
        <begin position="517"/>
        <end position="574"/>
    </location>
</feature>
<feature type="transmembrane region" description="Helical" evidence="1">
    <location>
        <begin position="575"/>
        <end position="595"/>
    </location>
</feature>
<feature type="topological domain" description="Cytoplasmic" evidence="1">
    <location>
        <begin position="596"/>
        <end position="955"/>
    </location>
</feature>
<feature type="region of interest" description="Disordered" evidence="2">
    <location>
        <begin position="1"/>
        <end position="61"/>
    </location>
</feature>
<feature type="region of interest" description="Disordered" evidence="2">
    <location>
        <begin position="328"/>
        <end position="358"/>
    </location>
</feature>
<feature type="compositionally biased region" description="Polar residues" evidence="2">
    <location>
        <begin position="1"/>
        <end position="10"/>
    </location>
</feature>
<feature type="compositionally biased region" description="Basic and acidic residues" evidence="2">
    <location>
        <begin position="11"/>
        <end position="20"/>
    </location>
</feature>
<feature type="compositionally biased region" description="Basic and acidic residues" evidence="2">
    <location>
        <begin position="40"/>
        <end position="51"/>
    </location>
</feature>
<feature type="compositionally biased region" description="Low complexity" evidence="2">
    <location>
        <begin position="341"/>
        <end position="352"/>
    </location>
</feature>
<reference key="1">
    <citation type="submission" date="2005-09" db="EMBL/GenBank/DDBJ databases">
        <title>Annotation of the Aspergillus terreus NIH2624 genome.</title>
        <authorList>
            <person name="Birren B.W."/>
            <person name="Lander E.S."/>
            <person name="Galagan J.E."/>
            <person name="Nusbaum C."/>
            <person name="Devon K."/>
            <person name="Henn M."/>
            <person name="Ma L.-J."/>
            <person name="Jaffe D.B."/>
            <person name="Butler J."/>
            <person name="Alvarez P."/>
            <person name="Gnerre S."/>
            <person name="Grabherr M."/>
            <person name="Kleber M."/>
            <person name="Mauceli E.W."/>
            <person name="Brockman W."/>
            <person name="Rounsley S."/>
            <person name="Young S.K."/>
            <person name="LaButti K."/>
            <person name="Pushparaj V."/>
            <person name="DeCaprio D."/>
            <person name="Crawford M."/>
            <person name="Koehrsen M."/>
            <person name="Engels R."/>
            <person name="Montgomery P."/>
            <person name="Pearson M."/>
            <person name="Howarth C."/>
            <person name="Larson L."/>
            <person name="Luoma S."/>
            <person name="White J."/>
            <person name="Alvarado L."/>
            <person name="Kodira C.D."/>
            <person name="Zeng Q."/>
            <person name="Oleary S."/>
            <person name="Yandava C."/>
            <person name="Denning D.W."/>
            <person name="Nierman W.C."/>
            <person name="Milne T."/>
            <person name="Madden K."/>
        </authorList>
    </citation>
    <scope>NUCLEOTIDE SEQUENCE [LARGE SCALE GENOMIC DNA]</scope>
    <source>
        <strain>NIH 2624 / FGSC A1156</strain>
    </source>
</reference>
<name>CHO2_ASPTN</name>
<evidence type="ECO:0000255" key="1">
    <source>
        <dbReference type="HAMAP-Rule" id="MF_03217"/>
    </source>
</evidence>
<evidence type="ECO:0000256" key="2">
    <source>
        <dbReference type="SAM" id="MobiDB-lite"/>
    </source>
</evidence>
<proteinExistence type="inferred from homology"/>